<keyword id="KW-0106">Calcium</keyword>
<keyword id="KW-0238">DNA-binding</keyword>
<keyword id="KW-0378">Hydrolase</keyword>
<keyword id="KW-0460">Magnesium</keyword>
<keyword id="KW-0540">Nuclease</keyword>
<keyword id="KW-0614">Plasmid</keyword>
<keyword id="KW-0964">Secreted</keyword>
<keyword id="KW-0732">Signal</keyword>
<dbReference type="EC" id="3.1.-.-" evidence="4"/>
<dbReference type="EMBL" id="CP001906">
    <property type="protein sequence ID" value="ADC73152.1"/>
    <property type="molecule type" value="Genomic_DNA"/>
</dbReference>
<dbReference type="RefSeq" id="WP_013006517.1">
    <property type="nucleotide sequence ID" value="NC_013930.1"/>
</dbReference>
<dbReference type="SMR" id="D3SGB1"/>
<dbReference type="KEGG" id="tkm:TK90_2665"/>
<dbReference type="eggNOG" id="COG1555">
    <property type="taxonomic scope" value="Bacteria"/>
</dbReference>
<dbReference type="eggNOG" id="COG3568">
    <property type="taxonomic scope" value="Bacteria"/>
</dbReference>
<dbReference type="HOGENOM" id="CLU_065121_0_0_6"/>
<dbReference type="OrthoDB" id="1201035at2"/>
<dbReference type="Proteomes" id="UP000009099">
    <property type="component" value="Plasmid pTK9001"/>
</dbReference>
<dbReference type="GO" id="GO:0005576">
    <property type="term" value="C:extracellular region"/>
    <property type="evidence" value="ECO:0007669"/>
    <property type="project" value="UniProtKB-SubCell"/>
</dbReference>
<dbReference type="GO" id="GO:0003677">
    <property type="term" value="F:DNA binding"/>
    <property type="evidence" value="ECO:0007669"/>
    <property type="project" value="UniProtKB-KW"/>
</dbReference>
<dbReference type="GO" id="GO:0004536">
    <property type="term" value="F:DNA nuclease activity"/>
    <property type="evidence" value="ECO:0007669"/>
    <property type="project" value="InterPro"/>
</dbReference>
<dbReference type="GO" id="GO:0006308">
    <property type="term" value="P:DNA catabolic process"/>
    <property type="evidence" value="ECO:0007669"/>
    <property type="project" value="InterPro"/>
</dbReference>
<dbReference type="GO" id="GO:0006281">
    <property type="term" value="P:DNA repair"/>
    <property type="evidence" value="ECO:0007669"/>
    <property type="project" value="InterPro"/>
</dbReference>
<dbReference type="CDD" id="cd10283">
    <property type="entry name" value="MnuA_DNase1-like"/>
    <property type="match status" value="1"/>
</dbReference>
<dbReference type="Gene3D" id="3.60.10.10">
    <property type="entry name" value="Endonuclease/exonuclease/phosphatase"/>
    <property type="match status" value="1"/>
</dbReference>
<dbReference type="Gene3D" id="1.10.150.320">
    <property type="entry name" value="Photosystem II 12 kDa extrinsic protein"/>
    <property type="match status" value="1"/>
</dbReference>
<dbReference type="InterPro" id="IPR016202">
    <property type="entry name" value="DNase_I"/>
</dbReference>
<dbReference type="InterPro" id="IPR036691">
    <property type="entry name" value="Endo/exonu/phosph_ase_sf"/>
</dbReference>
<dbReference type="InterPro" id="IPR005135">
    <property type="entry name" value="Endo/exonuclease/phosphatase"/>
</dbReference>
<dbReference type="InterPro" id="IPR003583">
    <property type="entry name" value="Hlx-hairpin-Hlx_DNA-bd_motif"/>
</dbReference>
<dbReference type="InterPro" id="IPR010994">
    <property type="entry name" value="RuvA_2-like"/>
</dbReference>
<dbReference type="PANTHER" id="PTHR11371">
    <property type="entry name" value="DEOXYRIBONUCLEASE"/>
    <property type="match status" value="1"/>
</dbReference>
<dbReference type="PANTHER" id="PTHR11371:SF31">
    <property type="entry name" value="EXTRACELLULAR NUCLEASE"/>
    <property type="match status" value="1"/>
</dbReference>
<dbReference type="Pfam" id="PF03372">
    <property type="entry name" value="Exo_endo_phos"/>
    <property type="match status" value="1"/>
</dbReference>
<dbReference type="Pfam" id="PF12836">
    <property type="entry name" value="HHH_3"/>
    <property type="match status" value="1"/>
</dbReference>
<dbReference type="SMART" id="SM00476">
    <property type="entry name" value="DNaseIc"/>
    <property type="match status" value="1"/>
</dbReference>
<dbReference type="SMART" id="SM00278">
    <property type="entry name" value="HhH1"/>
    <property type="match status" value="2"/>
</dbReference>
<dbReference type="SUPFAM" id="SSF56219">
    <property type="entry name" value="DNase I-like"/>
    <property type="match status" value="1"/>
</dbReference>
<dbReference type="SUPFAM" id="SSF47781">
    <property type="entry name" value="RuvA domain 2-like"/>
    <property type="match status" value="1"/>
</dbReference>
<feature type="signal peptide" evidence="1">
    <location>
        <begin position="1"/>
        <end position="24"/>
    </location>
</feature>
<feature type="chain" id="PRO_5000576882" description="Deoxyribonuclease">
    <location>
        <begin position="25"/>
        <end position="361"/>
    </location>
</feature>
<feature type="active site" evidence="4">
    <location>
        <position position="149"/>
    </location>
</feature>
<feature type="mutagenesis site" description="Loss of catalytic activity, is unable to digest DNA at any of the tested concentrations of NaCl." evidence="2">
    <original>H</original>
    <variation>A</variation>
    <location>
        <position position="149"/>
    </location>
</feature>
<feature type="mutagenesis site" description="Retains DNase activity, but this mutant noticeably digests the DNA substrate only up to 0.6 M NaCl and the DNA digestion is completely inhibited at NaCl concentrations higher than 1.2 M." evidence="2">
    <location>
        <begin position="283"/>
        <end position="361"/>
    </location>
</feature>
<proteinExistence type="evidence at protein level"/>
<name>DNAS1_THISK</name>
<sequence length="361" mass="40497">MMHLLRRGAFAILLIVLLPSAALADLRLASWNIQHLGWNVGKDYPAVARIAAQFDFLAIQEVMNAEGIYRLRDTLEDATGAEWSVLYSDALGRNTYREKYAFLWREAAVEYVGGALTYIDEADRFAREPFSAVFRSRGTDQHFLAATVHITYGDRVADRVEEIEALRRYWDWLADVMPEYAGERILFGDFNLPPHHDGWASMRAVAEPLVTEGATTLSTHDRRYANLYDNLWVPKDHTLPLGDAGILPFPVVLSEVTGVYWDHEKARDRVSDHAPVYVLFEGNTLHDAVVAEIADQEAGCIDLNRASVSELTALPHIGEARAEAIKDGRPWNAVRDLKEIRGIGAGRLEEIKARGEACIEP</sequence>
<geneLocation type="plasmid" evidence="5 6">
    <name>pTK9001</name>
</geneLocation>
<organism>
    <name type="scientific">Thioalkalivibrio sp. (strain K90mix)</name>
    <dbReference type="NCBI Taxonomy" id="396595"/>
    <lineage>
        <taxon>Bacteria</taxon>
        <taxon>Pseudomonadati</taxon>
        <taxon>Pseudomonadota</taxon>
        <taxon>Gammaproteobacteria</taxon>
        <taxon>Chromatiales</taxon>
        <taxon>Ectothiorhodospiraceae</taxon>
        <taxon>Thioalkalivibrio</taxon>
    </lineage>
</organism>
<evidence type="ECO:0000255" key="1"/>
<evidence type="ECO:0000269" key="2">
    <source>
    </source>
</evidence>
<evidence type="ECO:0000303" key="3">
    <source>
    </source>
</evidence>
<evidence type="ECO:0000305" key="4">
    <source>
    </source>
</evidence>
<evidence type="ECO:0000312" key="5">
    <source>
        <dbReference type="EMBL" id="ADC73152.1"/>
    </source>
</evidence>
<evidence type="ECO:0000312" key="6">
    <source>
        <dbReference type="Proteomes" id="UP000009099"/>
    </source>
</evidence>
<accession>D3SGB1</accession>
<reference key="1">
    <citation type="submission" date="2010-02" db="EMBL/GenBank/DDBJ databases">
        <title>Complete sequence of plasmid of Thioalkalivibrio sp. K90mix.</title>
        <authorList>
            <consortium name="US DOE Joint Genome Institute"/>
            <person name="Lucas S."/>
            <person name="Copeland A."/>
            <person name="Lapidus A."/>
            <person name="Cheng J.-F."/>
            <person name="Bruce D."/>
            <person name="Goodwin L."/>
            <person name="Pitluck S."/>
            <person name="Foster B."/>
            <person name="Sun H."/>
            <person name="Larimer F."/>
            <person name="Land M."/>
            <person name="Hauser L."/>
            <person name="Kyrpides N."/>
            <person name="Ivanova N."/>
            <person name="Sorokin D.Y."/>
            <person name="Muyzer G."/>
            <person name="Woyke T."/>
        </authorList>
    </citation>
    <scope>NUCLEOTIDE SEQUENCE [LARGE SCALE GENOMIC DNA]</scope>
    <source>
        <strain evidence="5">K90mix</strain>
        <plasmid>pTK9001</plasmid>
    </source>
</reference>
<reference key="2">
    <citation type="journal article" date="2015" name="Front. Microbiol.">
        <title>Domain organization of DNase from Thioalkalivibrio sp. provides insights into retention of activity in high salt environments.</title>
        <authorList>
            <person name="Alzbutas G."/>
            <person name="Kaniusaite M."/>
            <person name="Grybauskas A."/>
            <person name="Lagunavicius A."/>
        </authorList>
    </citation>
    <scope>FUNCTION</scope>
    <scope>COFACTOR</scope>
    <scope>DOMAIN</scope>
    <scope>SUBCELLULAR LOCATION</scope>
    <scope>MUTAGENESIS OF HIS-149 AND 283-ASN--PRO-361</scope>
    <scope>3D-STRUCTURE MODELING</scope>
    <scope>ACTIVE SITE</scope>
    <source>
        <strain>K90mix</strain>
    </source>
</reference>
<gene>
    <name evidence="5" type="ORF">TK90_2665</name>
</gene>
<protein>
    <recommendedName>
        <fullName evidence="3">Deoxyribonuclease</fullName>
        <shortName evidence="3">DNase</shortName>
        <ecNumber evidence="4">3.1.-.-</ecNumber>
    </recommendedName>
</protein>
<comment type="function">
    <text evidence="2">DNA nuclease able to digest short and long DNA substrate. Is resistant to ionic strength and thus active at high salt concentration.</text>
</comment>
<comment type="cofactor">
    <cofactor evidence="2">
        <name>Mg(2+)</name>
        <dbReference type="ChEBI" id="CHEBI:18420"/>
    </cofactor>
    <cofactor evidence="2">
        <name>Ca(2+)</name>
        <dbReference type="ChEBI" id="CHEBI:29108"/>
    </cofactor>
    <text evidence="2">Requires Ca(2+) or Mg(2+) for catalytic activity and the maximum activity is achieved when both of these ion species are present.</text>
</comment>
<comment type="subcellular location">
    <subcellularLocation>
        <location evidence="4">Secreted</location>
    </subcellularLocation>
</comment>
<comment type="domain">
    <text evidence="2">Harbors two domains: an N-terminal domain, that exhibits DNase activity, and a C-terminal domain, comprising a duplicate DNA binding helix-hairpin-helix motif. The C-terminal domain is responsible for the enzyme's resistance to high ionic strength, it acts as a facilitator for DNA binding at high salt concentrations.</text>
</comment>
<comment type="miscellaneous">
    <text evidence="4">Thioalkalivibrio sp. K90mix is adapted to extreme salt concentrations and grows at salinities up to 4 M of NaCl.</text>
</comment>
<comment type="similarity">
    <text evidence="4">Belongs to the DNase I family.</text>
</comment>